<geneLocation type="chloroplast"/>
<proteinExistence type="inferred from homology"/>
<protein>
    <recommendedName>
        <fullName>Probable RuBisCO transcriptional regulator</fullName>
    </recommendedName>
</protein>
<evidence type="ECO:0000250" key="1"/>
<evidence type="ECO:0000255" key="2">
    <source>
        <dbReference type="PROSITE-ProRule" id="PRU00253"/>
    </source>
</evidence>
<evidence type="ECO:0000305" key="3"/>
<feature type="chain" id="PRO_0000280076" description="Probable RuBisCO transcriptional regulator">
    <location>
        <begin position="1"/>
        <end position="303"/>
    </location>
</feature>
<feature type="domain" description="HTH lysR-type" evidence="2">
    <location>
        <begin position="6"/>
        <end position="63"/>
    </location>
</feature>
<feature type="DNA-binding region" description="H-T-H motif" evidence="2">
    <location>
        <begin position="23"/>
        <end position="42"/>
    </location>
</feature>
<reference key="1">
    <citation type="journal article" date="2003" name="DNA Res.">
        <title>Complete sequence and analysis of the plastid genome of the unicellular red alga Cyanidioschyzon merolae.</title>
        <authorList>
            <person name="Ohta N."/>
            <person name="Matsuzaki M."/>
            <person name="Misumi O."/>
            <person name="Miyagishima S.-Y."/>
            <person name="Nozaki H."/>
            <person name="Tanaka K."/>
            <person name="Shin-i T."/>
            <person name="Kohara Y."/>
            <person name="Kuroiwa T."/>
        </authorList>
    </citation>
    <scope>NUCLEOTIDE SEQUENCE [LARGE SCALE GENOMIC DNA]</scope>
    <source>
        <strain>NIES-3377 / 10D</strain>
    </source>
</reference>
<accession>Q85G62</accession>
<name>RBCR_CYAM1</name>
<gene>
    <name type="primary">rbcR</name>
    <name type="synonym">ycf30</name>
</gene>
<sequence>MTDLPFTLDQLRIFQAIVVEGSFQKAAQSLYISQPAVSLQIQNLEQQLNAPLFDRSHRKAKLTEAGQVFFKYASRILALCEETCRALEDLHHLQAGSLIIGASQTIGTYLMPGLIGLFRQKYPHICVQLQVHSTRRIAWSVAKGHIDVAVIGGAIPTELIPLLSIQPFAEDELTLIVPPDHPFARLSKIQKEDLYRLRFVSLDRHSTIRKVIDQILHQNGIDTNRLKMEMELNSIEAIKNAVQWGLGAAFVSVCAIAKELELNLVREVEIEAISIKRQLYQITNPNRYQSKAAFTFCQQMLNV</sequence>
<comment type="function">
    <text evidence="1">Trans-acting transcriptional regulator of RuBisCO genes (rbcL and rbcS) expression.</text>
</comment>
<comment type="subcellular location">
    <subcellularLocation>
        <location>Plastid</location>
        <location>Chloroplast</location>
    </subcellularLocation>
</comment>
<comment type="similarity">
    <text evidence="3">Belongs to the LysR transcriptional regulatory family.</text>
</comment>
<dbReference type="EMBL" id="AB002583">
    <property type="protein sequence ID" value="BAC76129.1"/>
    <property type="molecule type" value="Genomic_DNA"/>
</dbReference>
<dbReference type="RefSeq" id="NP_848967.1">
    <property type="nucleotide sequence ID" value="NC_004799.1"/>
</dbReference>
<dbReference type="SMR" id="Q85G62"/>
<dbReference type="STRING" id="280699.Q85G62"/>
<dbReference type="EnsemblPlants" id="CMV044CT">
    <property type="protein sequence ID" value="CMV044CT"/>
    <property type="gene ID" value="CMV044C"/>
</dbReference>
<dbReference type="GeneID" id="845075"/>
<dbReference type="Gramene" id="CMV044CT">
    <property type="protein sequence ID" value="CMV044CT"/>
    <property type="gene ID" value="CMV044C"/>
</dbReference>
<dbReference type="KEGG" id="cme:CymeCp035"/>
<dbReference type="eggNOG" id="ENOG502S17Z">
    <property type="taxonomic scope" value="Eukaryota"/>
</dbReference>
<dbReference type="HOGENOM" id="CLU_039613_6_1_1"/>
<dbReference type="Proteomes" id="UP000007014">
    <property type="component" value="Chloroplast"/>
</dbReference>
<dbReference type="GO" id="GO:0009507">
    <property type="term" value="C:chloroplast"/>
    <property type="evidence" value="ECO:0007669"/>
    <property type="project" value="UniProtKB-SubCell"/>
</dbReference>
<dbReference type="GO" id="GO:0003700">
    <property type="term" value="F:DNA-binding transcription factor activity"/>
    <property type="evidence" value="ECO:0007669"/>
    <property type="project" value="InterPro"/>
</dbReference>
<dbReference type="GO" id="GO:0000976">
    <property type="term" value="F:transcription cis-regulatory region binding"/>
    <property type="evidence" value="ECO:0007669"/>
    <property type="project" value="TreeGrafter"/>
</dbReference>
<dbReference type="CDD" id="cd08420">
    <property type="entry name" value="PBP2_CysL_like"/>
    <property type="match status" value="1"/>
</dbReference>
<dbReference type="FunFam" id="1.10.10.10:FF:000001">
    <property type="entry name" value="LysR family transcriptional regulator"/>
    <property type="match status" value="1"/>
</dbReference>
<dbReference type="Gene3D" id="3.40.190.290">
    <property type="match status" value="1"/>
</dbReference>
<dbReference type="Gene3D" id="1.10.10.10">
    <property type="entry name" value="Winged helix-like DNA-binding domain superfamily/Winged helix DNA-binding domain"/>
    <property type="match status" value="1"/>
</dbReference>
<dbReference type="InterPro" id="IPR005119">
    <property type="entry name" value="LysR_subst-bd"/>
</dbReference>
<dbReference type="InterPro" id="IPR000847">
    <property type="entry name" value="Tscrpt_reg_HTH_LysR"/>
</dbReference>
<dbReference type="InterPro" id="IPR036388">
    <property type="entry name" value="WH-like_DNA-bd_sf"/>
</dbReference>
<dbReference type="InterPro" id="IPR036390">
    <property type="entry name" value="WH_DNA-bd_sf"/>
</dbReference>
<dbReference type="PANTHER" id="PTHR30126">
    <property type="entry name" value="HTH-TYPE TRANSCRIPTIONAL REGULATOR"/>
    <property type="match status" value="1"/>
</dbReference>
<dbReference type="PANTHER" id="PTHR30126:SF39">
    <property type="entry name" value="HTH-TYPE TRANSCRIPTIONAL REGULATOR CYSL"/>
    <property type="match status" value="1"/>
</dbReference>
<dbReference type="Pfam" id="PF00126">
    <property type="entry name" value="HTH_1"/>
    <property type="match status" value="1"/>
</dbReference>
<dbReference type="Pfam" id="PF03466">
    <property type="entry name" value="LysR_substrate"/>
    <property type="match status" value="1"/>
</dbReference>
<dbReference type="PRINTS" id="PR00039">
    <property type="entry name" value="HTHLYSR"/>
</dbReference>
<dbReference type="SUPFAM" id="SSF53850">
    <property type="entry name" value="Periplasmic binding protein-like II"/>
    <property type="match status" value="1"/>
</dbReference>
<dbReference type="SUPFAM" id="SSF46785">
    <property type="entry name" value="Winged helix' DNA-binding domain"/>
    <property type="match status" value="1"/>
</dbReference>
<dbReference type="PROSITE" id="PS50931">
    <property type="entry name" value="HTH_LYSR"/>
    <property type="match status" value="1"/>
</dbReference>
<organism>
    <name type="scientific">Cyanidioschyzon merolae (strain NIES-3377 / 10D)</name>
    <name type="common">Unicellular red alga</name>
    <dbReference type="NCBI Taxonomy" id="280699"/>
    <lineage>
        <taxon>Eukaryota</taxon>
        <taxon>Rhodophyta</taxon>
        <taxon>Bangiophyceae</taxon>
        <taxon>Cyanidiales</taxon>
        <taxon>Cyanidiaceae</taxon>
        <taxon>Cyanidioschyzon</taxon>
    </lineage>
</organism>
<keyword id="KW-0150">Chloroplast</keyword>
<keyword id="KW-0238">DNA-binding</keyword>
<keyword id="KW-0934">Plastid</keyword>
<keyword id="KW-1185">Reference proteome</keyword>
<keyword id="KW-0804">Transcription</keyword>
<keyword id="KW-0805">Transcription regulation</keyword>